<gene>
    <name type="primary">SRB5</name>
    <name type="synonym">MED18</name>
    <name type="ORF">PICST_83532</name>
</gene>
<name>MED18_PICST</name>
<dbReference type="EMBL" id="CP000498">
    <property type="protein sequence ID" value="ABN66182.2"/>
    <property type="molecule type" value="Genomic_DNA"/>
</dbReference>
<dbReference type="RefSeq" id="XP_001384211.2">
    <property type="nucleotide sequence ID" value="XM_001384174.1"/>
</dbReference>
<dbReference type="SMR" id="A3LU54"/>
<dbReference type="STRING" id="322104.A3LU54"/>
<dbReference type="GeneID" id="4838780"/>
<dbReference type="KEGG" id="pic:PICST_83532"/>
<dbReference type="eggNOG" id="ENOG502S41C">
    <property type="taxonomic scope" value="Eukaryota"/>
</dbReference>
<dbReference type="HOGENOM" id="CLU_058255_0_0_1"/>
<dbReference type="InParanoid" id="A3LU54"/>
<dbReference type="OMA" id="PGKVNQI"/>
<dbReference type="OrthoDB" id="5348092at2759"/>
<dbReference type="Proteomes" id="UP000002258">
    <property type="component" value="Chromosome 4"/>
</dbReference>
<dbReference type="GO" id="GO:0070847">
    <property type="term" value="C:core mediator complex"/>
    <property type="evidence" value="ECO:0007669"/>
    <property type="project" value="TreeGrafter"/>
</dbReference>
<dbReference type="GO" id="GO:0016592">
    <property type="term" value="C:mediator complex"/>
    <property type="evidence" value="ECO:0007669"/>
    <property type="project" value="InterPro"/>
</dbReference>
<dbReference type="GO" id="GO:0003712">
    <property type="term" value="F:transcription coregulator activity"/>
    <property type="evidence" value="ECO:0007669"/>
    <property type="project" value="InterPro"/>
</dbReference>
<dbReference type="GO" id="GO:0006357">
    <property type="term" value="P:regulation of transcription by RNA polymerase II"/>
    <property type="evidence" value="ECO:0007669"/>
    <property type="project" value="InterPro"/>
</dbReference>
<dbReference type="GO" id="GO:0006369">
    <property type="term" value="P:termination of RNA polymerase II transcription"/>
    <property type="evidence" value="ECO:0007669"/>
    <property type="project" value="TreeGrafter"/>
</dbReference>
<dbReference type="Gene3D" id="2.40.320.10">
    <property type="entry name" value="Hypothetical Protein Pfu-838710-001"/>
    <property type="match status" value="1"/>
</dbReference>
<dbReference type="InterPro" id="IPR019095">
    <property type="entry name" value="Mediator_Med18"/>
</dbReference>
<dbReference type="PANTHER" id="PTHR13321:SF2">
    <property type="entry name" value="MEDIATOR OF RNA POLYMERASE II TRANSCRIPTION SUBUNIT 18"/>
    <property type="match status" value="1"/>
</dbReference>
<dbReference type="PANTHER" id="PTHR13321">
    <property type="entry name" value="MEDIATOR OF RNA POLYMERASE II TRANSCRIPTION, SUBUNIT 18"/>
    <property type="match status" value="1"/>
</dbReference>
<dbReference type="Pfam" id="PF09637">
    <property type="entry name" value="Med18"/>
    <property type="match status" value="1"/>
</dbReference>
<accession>A3LU54</accession>
<keyword id="KW-0010">Activator</keyword>
<keyword id="KW-0175">Coiled coil</keyword>
<keyword id="KW-0539">Nucleus</keyword>
<keyword id="KW-1185">Reference proteome</keyword>
<keyword id="KW-0804">Transcription</keyword>
<keyword id="KW-0805">Transcription regulation</keyword>
<evidence type="ECO:0000250" key="1"/>
<evidence type="ECO:0000255" key="2"/>
<evidence type="ECO:0000256" key="3">
    <source>
        <dbReference type="SAM" id="MobiDB-lite"/>
    </source>
</evidence>
<evidence type="ECO:0000305" key="4"/>
<protein>
    <recommendedName>
        <fullName>Mediator of RNA polymerase II transcription subunit 18</fullName>
    </recommendedName>
    <alternativeName>
        <fullName>Mediator complex subunit 18</fullName>
    </alternativeName>
</protein>
<reference key="1">
    <citation type="journal article" date="2007" name="Nat. Biotechnol.">
        <title>Genome sequence of the lignocellulose-bioconverting and xylose-fermenting yeast Pichia stipitis.</title>
        <authorList>
            <person name="Jeffries T.W."/>
            <person name="Grigoriev I.V."/>
            <person name="Grimwood J."/>
            <person name="Laplaza J.M."/>
            <person name="Aerts A."/>
            <person name="Salamov A."/>
            <person name="Schmutz J."/>
            <person name="Lindquist E."/>
            <person name="Dehal P."/>
            <person name="Shapiro H."/>
            <person name="Jin Y.-S."/>
            <person name="Passoth V."/>
            <person name="Richardson P.M."/>
        </authorList>
    </citation>
    <scope>NUCLEOTIDE SEQUENCE [LARGE SCALE GENOMIC DNA]</scope>
    <source>
        <strain>ATCC 58785 / CBS 6054 / NBRC 10063 / NRRL Y-11545</strain>
    </source>
</reference>
<organism>
    <name type="scientific">Scheffersomyces stipitis (strain ATCC 58785 / CBS 6054 / NBRC 10063 / NRRL Y-11545)</name>
    <name type="common">Yeast</name>
    <name type="synonym">Pichia stipitis</name>
    <dbReference type="NCBI Taxonomy" id="322104"/>
    <lineage>
        <taxon>Eukaryota</taxon>
        <taxon>Fungi</taxon>
        <taxon>Dikarya</taxon>
        <taxon>Ascomycota</taxon>
        <taxon>Saccharomycotina</taxon>
        <taxon>Pichiomycetes</taxon>
        <taxon>Debaryomycetaceae</taxon>
        <taxon>Scheffersomyces</taxon>
    </lineage>
</organism>
<sequence>MVHQLSLVSSIAHGSYVQTVSTLQAFTGMLSPQPIATYTLLTKPHEVFKPKFEPGKVNQIEQYYMKCITTWSDGSEFDLASAVIKENGSSNVFSGRLFHAEDESVQRIWTLQISDIPIAGKNQACSAQTIYESTLIHTHTNVKSEENKIDAMDVDLEHKDKSDVKGDTKEKEEDKKEEDKKEEDKKEEDKKEEDKKEEDKKEEEKVEKKNDEVKHSEVNLEDGAETGSGHKDSFLQFLEDLGYETISQYWIKGIRFFHGDIVIEIFKVLVRDDEVTEPKEEGKIALKLLDESNTFQIRTYINIAKSTDIDLINQGTKELLRLQEFLKNLFKLEIPDRMFMDSRVQVRK</sequence>
<feature type="chain" id="PRO_0000304764" description="Mediator of RNA polymerase II transcription subunit 18">
    <location>
        <begin position="1"/>
        <end position="348"/>
    </location>
</feature>
<feature type="region of interest" description="Disordered" evidence="3">
    <location>
        <begin position="152"/>
        <end position="227"/>
    </location>
</feature>
<feature type="coiled-coil region" evidence="2">
    <location>
        <begin position="167"/>
        <end position="223"/>
    </location>
</feature>
<feature type="compositionally biased region" description="Basic and acidic residues" evidence="3">
    <location>
        <begin position="152"/>
        <end position="218"/>
    </location>
</feature>
<comment type="function">
    <text evidence="1">Component of the Mediator complex, a coactivator involved in the regulated transcription of nearly all RNA polymerase II-dependent genes. Mediator functions as a bridge to convey information from gene-specific regulatory proteins to the basal RNA polymerase II transcription machinery. Mediator is recruited to promoters by direct interactions with regulatory proteins and serves as a scaffold for the assembly of a functional preinitiation complex with RNA polymerase II and the general transcription factors (By similarity).</text>
</comment>
<comment type="subunit">
    <text evidence="1">Component of the Mediator complex.</text>
</comment>
<comment type="subcellular location">
    <subcellularLocation>
        <location evidence="1">Nucleus</location>
    </subcellularLocation>
</comment>
<comment type="similarity">
    <text evidence="4">Belongs to the Mediator complex subunit 18 family.</text>
</comment>
<proteinExistence type="inferred from homology"/>